<keyword id="KW-0002">3D-structure</keyword>
<keyword id="KW-0379">Hydroxylation</keyword>
<keyword id="KW-1185">Reference proteome</keyword>
<keyword id="KW-0687">Ribonucleoprotein</keyword>
<keyword id="KW-0689">Ribosomal protein</keyword>
<dbReference type="EMBL" id="AL590449">
    <property type="protein sequence ID" value="CAD25759.1"/>
    <property type="molecule type" value="Genomic_DNA"/>
</dbReference>
<dbReference type="RefSeq" id="NP_586155.1">
    <property type="nucleotide sequence ID" value="NM_001041988.1"/>
</dbReference>
<dbReference type="PDB" id="7QEP">
    <property type="method" value="EM"/>
    <property type="resolution" value="2.70 A"/>
    <property type="chains" value="D3=1-140"/>
</dbReference>
<dbReference type="PDBsum" id="7QEP"/>
<dbReference type="EMDB" id="EMD-13936"/>
<dbReference type="SMR" id="Q8SR65"/>
<dbReference type="FunCoup" id="Q8SR65">
    <property type="interactions" value="213"/>
</dbReference>
<dbReference type="STRING" id="284813.Q8SR65"/>
<dbReference type="GeneID" id="859804"/>
<dbReference type="KEGG" id="ecu:ECU10_0400"/>
<dbReference type="VEuPathDB" id="MicrosporidiaDB:ECU10_0400"/>
<dbReference type="HOGENOM" id="CLU_115574_0_1_1"/>
<dbReference type="InParanoid" id="Q8SR65"/>
<dbReference type="OMA" id="KFRWSQR"/>
<dbReference type="OrthoDB" id="1713912at2759"/>
<dbReference type="Proteomes" id="UP000000819">
    <property type="component" value="Chromosome X"/>
</dbReference>
<dbReference type="GO" id="GO:0015935">
    <property type="term" value="C:small ribosomal subunit"/>
    <property type="evidence" value="ECO:0007669"/>
    <property type="project" value="InterPro"/>
</dbReference>
<dbReference type="GO" id="GO:0003735">
    <property type="term" value="F:structural constituent of ribosome"/>
    <property type="evidence" value="ECO:0007669"/>
    <property type="project" value="InterPro"/>
</dbReference>
<dbReference type="GO" id="GO:0006412">
    <property type="term" value="P:translation"/>
    <property type="evidence" value="ECO:0007669"/>
    <property type="project" value="InterPro"/>
</dbReference>
<dbReference type="CDD" id="cd03367">
    <property type="entry name" value="Ribosomal_S23"/>
    <property type="match status" value="1"/>
</dbReference>
<dbReference type="FunFam" id="2.40.50.140:FF:000007">
    <property type="entry name" value="40S ribosomal protein S23"/>
    <property type="match status" value="1"/>
</dbReference>
<dbReference type="Gene3D" id="2.40.50.140">
    <property type="entry name" value="Nucleic acid-binding proteins"/>
    <property type="match status" value="1"/>
</dbReference>
<dbReference type="InterPro" id="IPR012340">
    <property type="entry name" value="NA-bd_OB-fold"/>
</dbReference>
<dbReference type="InterPro" id="IPR006032">
    <property type="entry name" value="Ribosomal_uS12"/>
</dbReference>
<dbReference type="InterPro" id="IPR005680">
    <property type="entry name" value="Ribosomal_uS12_euk/arc"/>
</dbReference>
<dbReference type="NCBIfam" id="TIGR00982">
    <property type="entry name" value="uS12_E_A"/>
    <property type="match status" value="1"/>
</dbReference>
<dbReference type="PANTHER" id="PTHR11652">
    <property type="entry name" value="30S RIBOSOMAL PROTEIN S12 FAMILY MEMBER"/>
    <property type="match status" value="1"/>
</dbReference>
<dbReference type="Pfam" id="PF00164">
    <property type="entry name" value="Ribosom_S12_S23"/>
    <property type="match status" value="1"/>
</dbReference>
<dbReference type="PIRSF" id="PIRSF002133">
    <property type="entry name" value="Ribosomal_S12/S23"/>
    <property type="match status" value="1"/>
</dbReference>
<dbReference type="SUPFAM" id="SSF50249">
    <property type="entry name" value="Nucleic acid-binding proteins"/>
    <property type="match status" value="1"/>
</dbReference>
<dbReference type="PROSITE" id="PS00055">
    <property type="entry name" value="RIBOSOMAL_S12"/>
    <property type="match status" value="1"/>
</dbReference>
<proteinExistence type="evidence at protein level"/>
<protein>
    <recommendedName>
        <fullName evidence="3">Small ribosomal subunit protein uS12</fullName>
    </recommendedName>
    <alternativeName>
        <fullName>40S ribosomal protein S23</fullName>
    </alternativeName>
</protein>
<gene>
    <name type="primary">RPS23</name>
    <name type="ordered locus">ECU10_0400</name>
</gene>
<evidence type="ECO:0000250" key="1"/>
<evidence type="ECO:0000269" key="2">
    <source>
    </source>
</evidence>
<evidence type="ECO:0000305" key="3"/>
<reference key="1">
    <citation type="journal article" date="2001" name="Nature">
        <title>Genome sequence and gene compaction of the eukaryote parasite Encephalitozoon cuniculi.</title>
        <authorList>
            <person name="Katinka M.D."/>
            <person name="Duprat S."/>
            <person name="Cornillot E."/>
            <person name="Metenier G."/>
            <person name="Thomarat F."/>
            <person name="Prensier G."/>
            <person name="Barbe V."/>
            <person name="Peyretaillade E."/>
            <person name="Brottier P."/>
            <person name="Wincker P."/>
            <person name="Delbac F."/>
            <person name="El Alaoui H."/>
            <person name="Peyret P."/>
            <person name="Saurin W."/>
            <person name="Gouy M."/>
            <person name="Weissenbach J."/>
            <person name="Vivares C.P."/>
        </authorList>
    </citation>
    <scope>NUCLEOTIDE SEQUENCE [LARGE SCALE GENOMIC DNA]</scope>
    <source>
        <strain>GB-M1</strain>
    </source>
</reference>
<reference key="2">
    <citation type="journal article" date="2006" name="Proteomics">
        <title>Proteomic analysis of the eukaryotic parasite Encephalitozoon cuniculi (microsporidia): a reference map for proteins expressed in late sporogonial stages.</title>
        <authorList>
            <person name="Brosson D."/>
            <person name="Kuhn L."/>
            <person name="Delbac F."/>
            <person name="Garin J."/>
            <person name="Vivares C.P."/>
            <person name="Texier C."/>
        </authorList>
    </citation>
    <scope>IDENTIFICATION BY MASS SPECTROMETRY [LARGE SCALE ANALYSIS]</scope>
    <scope>DEVELOPMENTAL STAGE</scope>
</reference>
<accession>Q8SR65</accession>
<feature type="chain" id="PRO_0000146477" description="Small ribosomal subunit protein uS12">
    <location>
        <begin position="1"/>
        <end position="140"/>
    </location>
</feature>
<feature type="modified residue" description="Hydroxyproline" evidence="1">
    <location>
        <position position="59"/>
    </location>
</feature>
<sequence length="140" mass="15314">MPGLFSANNLIKSRKAKRLADTAYRKRALGTKYKHSVLGRAPQAKAIVLEKIGVEAKQPNSAIRKAVRCQLIATGKKITAFVPYDGSVTYIESNDEVTVEGFGKKGRSVGDIPGIRFKVCKVQNVSLHAIFTGKKEKPSR</sequence>
<organism>
    <name type="scientific">Encephalitozoon cuniculi (strain GB-M1)</name>
    <name type="common">Microsporidian parasite</name>
    <dbReference type="NCBI Taxonomy" id="284813"/>
    <lineage>
        <taxon>Eukaryota</taxon>
        <taxon>Fungi</taxon>
        <taxon>Fungi incertae sedis</taxon>
        <taxon>Microsporidia</taxon>
        <taxon>Unikaryonidae</taxon>
        <taxon>Encephalitozoon</taxon>
    </lineage>
</organism>
<comment type="developmental stage">
    <text evidence="2">Expressed in late sporogonial stages.</text>
</comment>
<comment type="similarity">
    <text evidence="3">Belongs to the universal ribosomal protein uS12 family.</text>
</comment>
<name>RS23_ENCCU</name>